<name>UGA3_YEAST</name>
<organism>
    <name type="scientific">Saccharomyces cerevisiae (strain ATCC 204508 / S288c)</name>
    <name type="common">Baker's yeast</name>
    <dbReference type="NCBI Taxonomy" id="559292"/>
    <lineage>
        <taxon>Eukaryota</taxon>
        <taxon>Fungi</taxon>
        <taxon>Dikarya</taxon>
        <taxon>Ascomycota</taxon>
        <taxon>Saccharomycotina</taxon>
        <taxon>Saccharomycetes</taxon>
        <taxon>Saccharomycetales</taxon>
        <taxon>Saccharomycetaceae</taxon>
        <taxon>Saccharomyces</taxon>
    </lineage>
</organism>
<evidence type="ECO:0000255" key="1"/>
<evidence type="ECO:0000255" key="2">
    <source>
        <dbReference type="PROSITE-ProRule" id="PRU00227"/>
    </source>
</evidence>
<evidence type="ECO:0000269" key="3">
    <source>
    </source>
</evidence>
<evidence type="ECO:0000269" key="4">
    <source>
    </source>
</evidence>
<keyword id="KW-0010">Activator</keyword>
<keyword id="KW-0238">DNA-binding</keyword>
<keyword id="KW-0479">Metal-binding</keyword>
<keyword id="KW-0539">Nucleus</keyword>
<keyword id="KW-1185">Reference proteome</keyword>
<keyword id="KW-0804">Transcription</keyword>
<keyword id="KW-0805">Transcription regulation</keyword>
<keyword id="KW-0862">Zinc</keyword>
<accession>P26370</accession>
<accession>D6VRI1</accession>
<dbReference type="EMBL" id="X51664">
    <property type="protein sequence ID" value="CAA35976.1"/>
    <property type="molecule type" value="Genomic_DNA"/>
</dbReference>
<dbReference type="EMBL" id="Z67750">
    <property type="protein sequence ID" value="CAA91576.1"/>
    <property type="molecule type" value="Genomic_DNA"/>
</dbReference>
<dbReference type="EMBL" id="Z74218">
    <property type="protein sequence ID" value="CAA98744.1"/>
    <property type="molecule type" value="Genomic_DNA"/>
</dbReference>
<dbReference type="EMBL" id="X82846">
    <property type="protein sequence ID" value="CAA58049.1"/>
    <property type="molecule type" value="Genomic_DNA"/>
</dbReference>
<dbReference type="EMBL" id="BK006938">
    <property type="protein sequence ID" value="DAA11691.1"/>
    <property type="molecule type" value="Genomic_DNA"/>
</dbReference>
<dbReference type="PIR" id="S14944">
    <property type="entry name" value="S14944"/>
</dbReference>
<dbReference type="RefSeq" id="NP_010111.1">
    <property type="nucleotide sequence ID" value="NM_001180230.1"/>
</dbReference>
<dbReference type="SMR" id="P26370"/>
<dbReference type="BioGRID" id="31895">
    <property type="interactions" value="85"/>
</dbReference>
<dbReference type="FunCoup" id="P26370">
    <property type="interactions" value="379"/>
</dbReference>
<dbReference type="STRING" id="4932.YDL170W"/>
<dbReference type="iPTMnet" id="P26370"/>
<dbReference type="PaxDb" id="4932-YDL170W"/>
<dbReference type="PeptideAtlas" id="P26370"/>
<dbReference type="EnsemblFungi" id="YDL170W_mRNA">
    <property type="protein sequence ID" value="YDL170W"/>
    <property type="gene ID" value="YDL170W"/>
</dbReference>
<dbReference type="GeneID" id="851384"/>
<dbReference type="KEGG" id="sce:YDL170W"/>
<dbReference type="AGR" id="SGD:S000002329"/>
<dbReference type="SGD" id="S000002329">
    <property type="gene designation" value="UGA3"/>
</dbReference>
<dbReference type="VEuPathDB" id="FungiDB:YDL170W"/>
<dbReference type="eggNOG" id="ENOG502RIXM">
    <property type="taxonomic scope" value="Eukaryota"/>
</dbReference>
<dbReference type="HOGENOM" id="CLU_015493_1_2_1"/>
<dbReference type="InParanoid" id="P26370"/>
<dbReference type="OMA" id="MPGTIDP"/>
<dbReference type="OrthoDB" id="5419315at2759"/>
<dbReference type="BioCyc" id="YEAST:G3O-29561-MONOMER"/>
<dbReference type="BioGRID-ORCS" id="851384">
    <property type="hits" value="3 hits in 13 CRISPR screens"/>
</dbReference>
<dbReference type="ChiTaRS" id="UGA3">
    <property type="organism name" value="yeast"/>
</dbReference>
<dbReference type="PRO" id="PR:P26370"/>
<dbReference type="Proteomes" id="UP000002311">
    <property type="component" value="Chromosome IV"/>
</dbReference>
<dbReference type="RNAct" id="P26370">
    <property type="molecule type" value="protein"/>
</dbReference>
<dbReference type="GO" id="GO:0005634">
    <property type="term" value="C:nucleus"/>
    <property type="evidence" value="ECO:0000314"/>
    <property type="project" value="SGD"/>
</dbReference>
<dbReference type="GO" id="GO:0001228">
    <property type="term" value="F:DNA-binding transcription activator activity, RNA polymerase II-specific"/>
    <property type="evidence" value="ECO:0000314"/>
    <property type="project" value="SGD"/>
</dbReference>
<dbReference type="GO" id="GO:0003700">
    <property type="term" value="F:DNA-binding transcription factor activity"/>
    <property type="evidence" value="ECO:0000318"/>
    <property type="project" value="GO_Central"/>
</dbReference>
<dbReference type="GO" id="GO:0000978">
    <property type="term" value="F:RNA polymerase II cis-regulatory region sequence-specific DNA binding"/>
    <property type="evidence" value="ECO:0000314"/>
    <property type="project" value="SGD"/>
</dbReference>
<dbReference type="GO" id="GO:0001010">
    <property type="term" value="F:RNA polymerase II sequence-specific DNA-binding transcription factor recruiting activity"/>
    <property type="evidence" value="ECO:0000314"/>
    <property type="project" value="SGD"/>
</dbReference>
<dbReference type="GO" id="GO:0000976">
    <property type="term" value="F:transcription cis-regulatory region binding"/>
    <property type="evidence" value="ECO:0000318"/>
    <property type="project" value="GO_Central"/>
</dbReference>
<dbReference type="GO" id="GO:0008270">
    <property type="term" value="F:zinc ion binding"/>
    <property type="evidence" value="ECO:0007669"/>
    <property type="project" value="InterPro"/>
</dbReference>
<dbReference type="GO" id="GO:0009450">
    <property type="term" value="P:gamma-aminobutyric acid catabolic process"/>
    <property type="evidence" value="ECO:0000315"/>
    <property type="project" value="SGD"/>
</dbReference>
<dbReference type="GO" id="GO:0019740">
    <property type="term" value="P:nitrogen utilization"/>
    <property type="evidence" value="ECO:0000315"/>
    <property type="project" value="SGD"/>
</dbReference>
<dbReference type="GO" id="GO:0045944">
    <property type="term" value="P:positive regulation of transcription by RNA polymerase II"/>
    <property type="evidence" value="ECO:0000315"/>
    <property type="project" value="SGD"/>
</dbReference>
<dbReference type="CDD" id="cd00067">
    <property type="entry name" value="GAL4"/>
    <property type="match status" value="1"/>
</dbReference>
<dbReference type="Gene3D" id="4.10.240.10">
    <property type="entry name" value="Zn(2)-C6 fungal-type DNA-binding domain"/>
    <property type="match status" value="1"/>
</dbReference>
<dbReference type="InterPro" id="IPR021858">
    <property type="entry name" value="Fun_TF"/>
</dbReference>
<dbReference type="InterPro" id="IPR036864">
    <property type="entry name" value="Zn2-C6_fun-type_DNA-bd_sf"/>
</dbReference>
<dbReference type="InterPro" id="IPR001138">
    <property type="entry name" value="Zn2Cys6_DnaBD"/>
</dbReference>
<dbReference type="PANTHER" id="PTHR37534">
    <property type="entry name" value="TRANSCRIPTIONAL ACTIVATOR PROTEIN UGA3"/>
    <property type="match status" value="1"/>
</dbReference>
<dbReference type="PANTHER" id="PTHR37534:SF7">
    <property type="entry name" value="TRANSCRIPTIONAL ACTIVATOR PROTEIN UGA3"/>
    <property type="match status" value="1"/>
</dbReference>
<dbReference type="Pfam" id="PF11951">
    <property type="entry name" value="Fungal_trans_2"/>
    <property type="match status" value="1"/>
</dbReference>
<dbReference type="Pfam" id="PF00172">
    <property type="entry name" value="Zn_clus"/>
    <property type="match status" value="1"/>
</dbReference>
<dbReference type="SMART" id="SM00066">
    <property type="entry name" value="GAL4"/>
    <property type="match status" value="1"/>
</dbReference>
<dbReference type="SUPFAM" id="SSF57701">
    <property type="entry name" value="Zn2/Cys6 DNA-binding domain"/>
    <property type="match status" value="1"/>
</dbReference>
<dbReference type="PROSITE" id="PS00463">
    <property type="entry name" value="ZN2_CY6_FUNGAL_1"/>
    <property type="match status" value="1"/>
</dbReference>
<dbReference type="PROSITE" id="PS50048">
    <property type="entry name" value="ZN2_CY6_FUNGAL_2"/>
    <property type="match status" value="1"/>
</dbReference>
<sequence length="528" mass="61224">MNYGVEKLKLKYSKHGCITCKIRKKRCSEDKPVCRDCRRLSFPCIYISESVDKQSLKKIKADIQHQLISKKRKHAPDSAQKAAVATRTRRVGSDEQDNQVYLSKPLEDCISQKLDSMGLQLYNYYRSHLANIISIAPMNQNYYLNIFLPMAHENDGILFAILAWSANHLSISSSNELRKDEIFVNLANKYTYMSLSHLKTNEGSSACAKLGFLYSLAQILILCGSEICQGDVKFWKILLNIGKNLIENHVGKDVSRILTTTTEEPSLEERIIFPNFNSVVKYWLIVNFIYHDILNFNTTSFPIEQYEKFFQRDQNSLPSSANFIESIDSPIEEIDPLIGINKPILLLLGQVTNLTRFLQTMEQEEMLEHGDKILSLQVEIYKLQPSLMALEHLDDEKKFYYLELFEIMKISTLMFFQLTLLKIDKDSLELQILRNKLDSKLDKVIGTFLEGSLCFPLFIYGVCIQVEDMEKKIDLEAKFDDILKRYKCYNFQNARLLIRKIWQNEADGISEHDLVHMIDELDYNINFA</sequence>
<reference key="1">
    <citation type="journal article" date="1990" name="Mol. Gen. Genet.">
        <title>The UGA3 gene regulating the GABA catabolic pathway in Saccharomyces cerevisiae codes for a putative zinc-finger protein acting on RNA amount.</title>
        <authorList>
            <person name="Andre B."/>
        </authorList>
    </citation>
    <scope>NUCLEOTIDE SEQUENCE [GENOMIC DNA]</scope>
    <scope>FUNCTION</scope>
    <scope>SUBCELLULAR LOCATION</scope>
    <scope>SUBUNIT</scope>
    <scope>MUTAGENESIS OF GLY-224 AND GLY-451</scope>
    <source>
        <strain>Sigma 1278B</strain>
    </source>
</reference>
<reference key="2">
    <citation type="journal article" date="1997" name="Nature">
        <title>The nucleotide sequence of Saccharomyces cerevisiae chromosome IV.</title>
        <authorList>
            <person name="Jacq C."/>
            <person name="Alt-Moerbe J."/>
            <person name="Andre B."/>
            <person name="Arnold W."/>
            <person name="Bahr A."/>
            <person name="Ballesta J.P.G."/>
            <person name="Bargues M."/>
            <person name="Baron L."/>
            <person name="Becker A."/>
            <person name="Biteau N."/>
            <person name="Bloecker H."/>
            <person name="Blugeon C."/>
            <person name="Boskovic J."/>
            <person name="Brandt P."/>
            <person name="Brueckner M."/>
            <person name="Buitrago M.J."/>
            <person name="Coster F."/>
            <person name="Delaveau T."/>
            <person name="del Rey F."/>
            <person name="Dujon B."/>
            <person name="Eide L.G."/>
            <person name="Garcia-Cantalejo J.M."/>
            <person name="Goffeau A."/>
            <person name="Gomez-Peris A."/>
            <person name="Granotier C."/>
            <person name="Hanemann V."/>
            <person name="Hankeln T."/>
            <person name="Hoheisel J.D."/>
            <person name="Jaeger W."/>
            <person name="Jimenez A."/>
            <person name="Jonniaux J.-L."/>
            <person name="Kraemer C."/>
            <person name="Kuester H."/>
            <person name="Laamanen P."/>
            <person name="Legros Y."/>
            <person name="Louis E.J."/>
            <person name="Moeller-Rieker S."/>
            <person name="Monnet A."/>
            <person name="Moro M."/>
            <person name="Mueller-Auer S."/>
            <person name="Nussbaumer B."/>
            <person name="Paricio N."/>
            <person name="Paulin L."/>
            <person name="Perea J."/>
            <person name="Perez-Alonso M."/>
            <person name="Perez-Ortin J.E."/>
            <person name="Pohl T.M."/>
            <person name="Prydz H."/>
            <person name="Purnelle B."/>
            <person name="Rasmussen S.W."/>
            <person name="Remacha M.A."/>
            <person name="Revuelta J.L."/>
            <person name="Rieger M."/>
            <person name="Salom D."/>
            <person name="Saluz H.P."/>
            <person name="Saiz J.E."/>
            <person name="Saren A.-M."/>
            <person name="Schaefer M."/>
            <person name="Scharfe M."/>
            <person name="Schmidt E.R."/>
            <person name="Schneider C."/>
            <person name="Scholler P."/>
            <person name="Schwarz S."/>
            <person name="Soler-Mira A."/>
            <person name="Urrestarazu L.A."/>
            <person name="Verhasselt P."/>
            <person name="Vissers S."/>
            <person name="Voet M."/>
            <person name="Volckaert G."/>
            <person name="Wagner G."/>
            <person name="Wambutt R."/>
            <person name="Wedler E."/>
            <person name="Wedler H."/>
            <person name="Woelfl S."/>
            <person name="Harris D.E."/>
            <person name="Bowman S."/>
            <person name="Brown D."/>
            <person name="Churcher C.M."/>
            <person name="Connor R."/>
            <person name="Dedman K."/>
            <person name="Gentles S."/>
            <person name="Hamlin N."/>
            <person name="Hunt S."/>
            <person name="Jones L."/>
            <person name="McDonald S."/>
            <person name="Murphy L.D."/>
            <person name="Niblett D."/>
            <person name="Odell C."/>
            <person name="Oliver K."/>
            <person name="Rajandream M.A."/>
            <person name="Richards C."/>
            <person name="Shore L."/>
            <person name="Walsh S.V."/>
            <person name="Barrell B.G."/>
            <person name="Dietrich F.S."/>
            <person name="Mulligan J.T."/>
            <person name="Allen E."/>
            <person name="Araujo R."/>
            <person name="Aviles E."/>
            <person name="Berno A."/>
            <person name="Carpenter J."/>
            <person name="Chen E."/>
            <person name="Cherry J.M."/>
            <person name="Chung E."/>
            <person name="Duncan M."/>
            <person name="Hunicke-Smith S."/>
            <person name="Hyman R.W."/>
            <person name="Komp C."/>
            <person name="Lashkari D."/>
            <person name="Lew H."/>
            <person name="Lin D."/>
            <person name="Mosedale D."/>
            <person name="Nakahara K."/>
            <person name="Namath A."/>
            <person name="Oefner P."/>
            <person name="Oh C."/>
            <person name="Petel F.X."/>
            <person name="Roberts D."/>
            <person name="Schramm S."/>
            <person name="Schroeder M."/>
            <person name="Shogren T."/>
            <person name="Shroff N."/>
            <person name="Winant A."/>
            <person name="Yelton M.A."/>
            <person name="Botstein D."/>
            <person name="Davis R.W."/>
            <person name="Johnston M."/>
            <person name="Andrews S."/>
            <person name="Brinkman R."/>
            <person name="Cooper J."/>
            <person name="Ding H."/>
            <person name="Du Z."/>
            <person name="Favello A."/>
            <person name="Fulton L."/>
            <person name="Gattung S."/>
            <person name="Greco T."/>
            <person name="Hallsworth K."/>
            <person name="Hawkins J."/>
            <person name="Hillier L.W."/>
            <person name="Jier M."/>
            <person name="Johnson D."/>
            <person name="Johnston L."/>
            <person name="Kirsten J."/>
            <person name="Kucaba T."/>
            <person name="Langston Y."/>
            <person name="Latreille P."/>
            <person name="Le T."/>
            <person name="Mardis E."/>
            <person name="Menezes S."/>
            <person name="Miller N."/>
            <person name="Nhan M."/>
            <person name="Pauley A."/>
            <person name="Peluso D."/>
            <person name="Rifkin L."/>
            <person name="Riles L."/>
            <person name="Taich A."/>
            <person name="Trevaskis E."/>
            <person name="Vignati D."/>
            <person name="Wilcox L."/>
            <person name="Wohldman P."/>
            <person name="Vaudin M."/>
            <person name="Wilson R."/>
            <person name="Waterston R."/>
            <person name="Albermann K."/>
            <person name="Hani J."/>
            <person name="Heumann K."/>
            <person name="Kleine K."/>
            <person name="Mewes H.-W."/>
            <person name="Zollner A."/>
            <person name="Zaccaria P."/>
        </authorList>
    </citation>
    <scope>NUCLEOTIDE SEQUENCE [LARGE SCALE GENOMIC DNA]</scope>
    <source>
        <strain>ATCC 204508 / S288c</strain>
    </source>
</reference>
<reference key="3">
    <citation type="journal article" date="2014" name="G3 (Bethesda)">
        <title>The reference genome sequence of Saccharomyces cerevisiae: Then and now.</title>
        <authorList>
            <person name="Engel S.R."/>
            <person name="Dietrich F.S."/>
            <person name="Fisk D.G."/>
            <person name="Binkley G."/>
            <person name="Balakrishnan R."/>
            <person name="Costanzo M.C."/>
            <person name="Dwight S.S."/>
            <person name="Hitz B.C."/>
            <person name="Karra K."/>
            <person name="Nash R.S."/>
            <person name="Weng S."/>
            <person name="Wong E.D."/>
            <person name="Lloyd P."/>
            <person name="Skrzypek M.S."/>
            <person name="Miyasato S.R."/>
            <person name="Simison M."/>
            <person name="Cherry J.M."/>
        </authorList>
    </citation>
    <scope>GENOME REANNOTATION</scope>
    <source>
        <strain>ATCC 204508 / S288c</strain>
    </source>
</reference>
<reference key="4">
    <citation type="submission" date="1994-11" db="EMBL/GenBank/DDBJ databases">
        <authorList>
            <person name="Lindner Z."/>
        </authorList>
    </citation>
    <scope>NUCLEOTIDE SEQUENCE [GENOMIC DNA] OF 453-528</scope>
    <source>
        <strain>ATCC 38626 / AH22 / NRRL Y-12843</strain>
    </source>
</reference>
<reference key="5">
    <citation type="journal article" date="2003" name="Nature">
        <title>Global analysis of protein expression in yeast.</title>
        <authorList>
            <person name="Ghaemmaghami S."/>
            <person name="Huh W.-K."/>
            <person name="Bower K."/>
            <person name="Howson R.W."/>
            <person name="Belle A."/>
            <person name="Dephoure N."/>
            <person name="O'Shea E.K."/>
            <person name="Weissman J.S."/>
        </authorList>
    </citation>
    <scope>LEVEL OF PROTEIN EXPRESSION [LARGE SCALE ANALYSIS]</scope>
</reference>
<protein>
    <recommendedName>
        <fullName>Transcriptional activator protein UGA3</fullName>
    </recommendedName>
</protein>
<feature type="chain" id="PRO_0000114986" description="Transcriptional activator protein UGA3">
    <location>
        <begin position="1"/>
        <end position="528"/>
    </location>
</feature>
<feature type="DNA-binding region" description="Zn(2)-C6 fungal-type" evidence="2">
    <location>
        <begin position="17"/>
        <end position="44"/>
    </location>
</feature>
<feature type="short sequence motif" description="Nuclear localization signal" evidence="1">
    <location>
        <begin position="55"/>
        <end position="62"/>
    </location>
</feature>
<feature type="mutagenesis site" description="Constitutive activity; when associated with R-451." evidence="4">
    <original>G</original>
    <variation>R</variation>
    <location>
        <position position="224"/>
    </location>
</feature>
<feature type="mutagenesis site" description="Loss of activity. Constitutive activity; when associated with R-224." evidence="4">
    <original>G</original>
    <variation>R</variation>
    <location>
        <position position="451"/>
    </location>
</feature>
<gene>
    <name type="primary">UGA3</name>
    <name type="ordered locus">YDL170W</name>
</gene>
<proteinExistence type="evidence at protein level"/>
<comment type="function">
    <text evidence="4">GABA-dependent positive regulation of genes required for catabolism of GABA (UGA4, UGA1, and UGA2).</text>
</comment>
<comment type="subunit">
    <text evidence="4">UGA3 proteins associate in oligomers, at least in the presence of inducer.</text>
</comment>
<comment type="subcellular location">
    <subcellularLocation>
        <location evidence="4">Nucleus</location>
    </subcellularLocation>
</comment>
<comment type="miscellaneous">
    <text evidence="3">Present with 1200 molecules/cell in log phase SD medium.</text>
</comment>